<name>NPD_BDEBA</name>
<dbReference type="EC" id="2.3.1.286" evidence="2 3"/>
<dbReference type="EMBL" id="BX842653">
    <property type="protein sequence ID" value="CAE80568.1"/>
    <property type="molecule type" value="Genomic_DNA"/>
</dbReference>
<dbReference type="RefSeq" id="WP_011165171.1">
    <property type="nucleotide sequence ID" value="NC_005363.1"/>
</dbReference>
<dbReference type="SMR" id="Q6MJJ2"/>
<dbReference type="STRING" id="264462.Bd2785"/>
<dbReference type="GeneID" id="93013663"/>
<dbReference type="KEGG" id="bba:Bd2785"/>
<dbReference type="eggNOG" id="COG0846">
    <property type="taxonomic scope" value="Bacteria"/>
</dbReference>
<dbReference type="HOGENOM" id="CLU_023643_3_1_7"/>
<dbReference type="Proteomes" id="UP000008080">
    <property type="component" value="Chromosome"/>
</dbReference>
<dbReference type="GO" id="GO:0005737">
    <property type="term" value="C:cytoplasm"/>
    <property type="evidence" value="ECO:0007669"/>
    <property type="project" value="UniProtKB-SubCell"/>
</dbReference>
<dbReference type="GO" id="GO:0017136">
    <property type="term" value="F:histone deacetylase activity, NAD-dependent"/>
    <property type="evidence" value="ECO:0007669"/>
    <property type="project" value="TreeGrafter"/>
</dbReference>
<dbReference type="GO" id="GO:0070403">
    <property type="term" value="F:NAD+ binding"/>
    <property type="evidence" value="ECO:0007669"/>
    <property type="project" value="UniProtKB-UniRule"/>
</dbReference>
<dbReference type="GO" id="GO:0036054">
    <property type="term" value="F:protein-malonyllysine demalonylase activity"/>
    <property type="evidence" value="ECO:0007669"/>
    <property type="project" value="InterPro"/>
</dbReference>
<dbReference type="GO" id="GO:0036055">
    <property type="term" value="F:protein-succinyllysine desuccinylase activity"/>
    <property type="evidence" value="ECO:0007669"/>
    <property type="project" value="UniProtKB-UniRule"/>
</dbReference>
<dbReference type="GO" id="GO:0008270">
    <property type="term" value="F:zinc ion binding"/>
    <property type="evidence" value="ECO:0007669"/>
    <property type="project" value="UniProtKB-UniRule"/>
</dbReference>
<dbReference type="CDD" id="cd01412">
    <property type="entry name" value="SIRT5_Af1_CobB"/>
    <property type="match status" value="1"/>
</dbReference>
<dbReference type="Gene3D" id="3.30.1600.10">
    <property type="entry name" value="SIR2/SIRT2 'Small Domain"/>
    <property type="match status" value="1"/>
</dbReference>
<dbReference type="Gene3D" id="3.40.50.1220">
    <property type="entry name" value="TPP-binding domain"/>
    <property type="match status" value="1"/>
</dbReference>
<dbReference type="HAMAP" id="MF_01121">
    <property type="entry name" value="Sirtuin_ClassIII"/>
    <property type="match status" value="1"/>
</dbReference>
<dbReference type="InterPro" id="IPR029035">
    <property type="entry name" value="DHS-like_NAD/FAD-binding_dom"/>
</dbReference>
<dbReference type="InterPro" id="IPR050134">
    <property type="entry name" value="NAD-dep_sirtuin_deacylases"/>
</dbReference>
<dbReference type="InterPro" id="IPR003000">
    <property type="entry name" value="Sirtuin"/>
</dbReference>
<dbReference type="InterPro" id="IPR026591">
    <property type="entry name" value="Sirtuin_cat_small_dom_sf"/>
</dbReference>
<dbReference type="InterPro" id="IPR027546">
    <property type="entry name" value="Sirtuin_class_III"/>
</dbReference>
<dbReference type="InterPro" id="IPR026590">
    <property type="entry name" value="Ssirtuin_cat_dom"/>
</dbReference>
<dbReference type="PANTHER" id="PTHR11085:SF4">
    <property type="entry name" value="NAD-DEPENDENT PROTEIN DEACYLASE"/>
    <property type="match status" value="1"/>
</dbReference>
<dbReference type="PANTHER" id="PTHR11085">
    <property type="entry name" value="NAD-DEPENDENT PROTEIN DEACYLASE SIRTUIN-5, MITOCHONDRIAL-RELATED"/>
    <property type="match status" value="1"/>
</dbReference>
<dbReference type="Pfam" id="PF02146">
    <property type="entry name" value="SIR2"/>
    <property type="match status" value="1"/>
</dbReference>
<dbReference type="SUPFAM" id="SSF52467">
    <property type="entry name" value="DHS-like NAD/FAD-binding domain"/>
    <property type="match status" value="1"/>
</dbReference>
<dbReference type="PROSITE" id="PS50305">
    <property type="entry name" value="SIRTUIN"/>
    <property type="match status" value="1"/>
</dbReference>
<reference key="1">
    <citation type="journal article" date="2004" name="Science">
        <title>A predator unmasked: life cycle of Bdellovibrio bacteriovorus from a genomic perspective.</title>
        <authorList>
            <person name="Rendulic S."/>
            <person name="Jagtap P."/>
            <person name="Rosinus A."/>
            <person name="Eppinger M."/>
            <person name="Baar C."/>
            <person name="Lanz C."/>
            <person name="Keller H."/>
            <person name="Lambert C."/>
            <person name="Evans K.J."/>
            <person name="Goesmann A."/>
            <person name="Meyer F."/>
            <person name="Sockett R.E."/>
            <person name="Schuster S.C."/>
        </authorList>
    </citation>
    <scope>NUCLEOTIDE SEQUENCE [LARGE SCALE GENOMIC DNA]</scope>
    <source>
        <strain>ATCC 15356 / DSM 50701 / NCIMB 9529 / HD100</strain>
    </source>
</reference>
<evidence type="ECO:0000250" key="1">
    <source>
        <dbReference type="UniProtKB" id="P0A2F2"/>
    </source>
</evidence>
<evidence type="ECO:0000255" key="2">
    <source>
        <dbReference type="HAMAP-Rule" id="MF_01121"/>
    </source>
</evidence>
<evidence type="ECO:0000255" key="3">
    <source>
        <dbReference type="PROSITE-ProRule" id="PRU00236"/>
    </source>
</evidence>
<evidence type="ECO:0000305" key="4"/>
<keyword id="KW-0963">Cytoplasm</keyword>
<keyword id="KW-0479">Metal-binding</keyword>
<keyword id="KW-0520">NAD</keyword>
<keyword id="KW-1185">Reference proteome</keyword>
<keyword id="KW-0808">Transferase</keyword>
<keyword id="KW-0862">Zinc</keyword>
<feature type="chain" id="PRO_0000110296" description="NAD-dependent protein deacylase">
    <location>
        <begin position="1"/>
        <end position="235"/>
    </location>
</feature>
<feature type="domain" description="Deacetylase sirtuin-type" evidence="3">
    <location>
        <begin position="1"/>
        <end position="235"/>
    </location>
</feature>
<feature type="active site" description="Proton acceptor" evidence="3">
    <location>
        <position position="113"/>
    </location>
</feature>
<feature type="binding site" evidence="2">
    <location>
        <begin position="14"/>
        <end position="33"/>
    </location>
    <ligand>
        <name>NAD(+)</name>
        <dbReference type="ChEBI" id="CHEBI:57540"/>
    </ligand>
</feature>
<feature type="binding site" evidence="2">
    <location>
        <position position="58"/>
    </location>
    <ligand>
        <name>substrate</name>
    </ligand>
</feature>
<feature type="binding site" evidence="2">
    <location>
        <position position="61"/>
    </location>
    <ligand>
        <name>substrate</name>
    </ligand>
</feature>
<feature type="binding site" evidence="2">
    <location>
        <begin position="95"/>
        <end position="98"/>
    </location>
    <ligand>
        <name>NAD(+)</name>
        <dbReference type="ChEBI" id="CHEBI:57540"/>
    </ligand>
</feature>
<feature type="binding site" evidence="2">
    <location>
        <position position="121"/>
    </location>
    <ligand>
        <name>Zn(2+)</name>
        <dbReference type="ChEBI" id="CHEBI:29105"/>
    </ligand>
</feature>
<feature type="binding site" evidence="2">
    <location>
        <position position="124"/>
    </location>
    <ligand>
        <name>Zn(2+)</name>
        <dbReference type="ChEBI" id="CHEBI:29105"/>
    </ligand>
</feature>
<feature type="binding site" evidence="2">
    <location>
        <position position="140"/>
    </location>
    <ligand>
        <name>Zn(2+)</name>
        <dbReference type="ChEBI" id="CHEBI:29105"/>
    </ligand>
</feature>
<feature type="binding site" evidence="2">
    <location>
        <position position="143"/>
    </location>
    <ligand>
        <name>Zn(2+)</name>
        <dbReference type="ChEBI" id="CHEBI:29105"/>
    </ligand>
</feature>
<feature type="binding site" evidence="2">
    <location>
        <begin position="180"/>
        <end position="182"/>
    </location>
    <ligand>
        <name>NAD(+)</name>
        <dbReference type="ChEBI" id="CHEBI:57540"/>
    </ligand>
</feature>
<feature type="binding site" evidence="2">
    <location>
        <begin position="204"/>
        <end position="206"/>
    </location>
    <ligand>
        <name>NAD(+)</name>
        <dbReference type="ChEBI" id="CHEBI:57540"/>
    </ligand>
</feature>
<feature type="binding site" evidence="2">
    <location>
        <position position="222"/>
    </location>
    <ligand>
        <name>NAD(+)</name>
        <dbReference type="ChEBI" id="CHEBI:57540"/>
    </ligand>
</feature>
<gene>
    <name evidence="2" type="primary">cobB</name>
    <name type="ordered locus">Bd2785</name>
</gene>
<comment type="function">
    <text evidence="2">NAD-dependent lysine deacetylase and desuccinylase that specifically removes acetyl and succinyl groups on target proteins. Modulates the activities of several proteins which are inactive in their acylated form.</text>
</comment>
<comment type="catalytic activity">
    <reaction evidence="2">
        <text>N(6)-acetyl-L-lysyl-[protein] + NAD(+) + H2O = 2''-O-acetyl-ADP-D-ribose + nicotinamide + L-lysyl-[protein]</text>
        <dbReference type="Rhea" id="RHEA:43636"/>
        <dbReference type="Rhea" id="RHEA-COMP:9752"/>
        <dbReference type="Rhea" id="RHEA-COMP:10731"/>
        <dbReference type="ChEBI" id="CHEBI:15377"/>
        <dbReference type="ChEBI" id="CHEBI:17154"/>
        <dbReference type="ChEBI" id="CHEBI:29969"/>
        <dbReference type="ChEBI" id="CHEBI:57540"/>
        <dbReference type="ChEBI" id="CHEBI:61930"/>
        <dbReference type="ChEBI" id="CHEBI:83767"/>
        <dbReference type="EC" id="2.3.1.286"/>
    </reaction>
</comment>
<comment type="catalytic activity">
    <reaction evidence="2">
        <text>N(6)-succinyl-L-lysyl-[protein] + NAD(+) + H2O = 2''-O-succinyl-ADP-D-ribose + nicotinamide + L-lysyl-[protein]</text>
        <dbReference type="Rhea" id="RHEA:47668"/>
        <dbReference type="Rhea" id="RHEA-COMP:9752"/>
        <dbReference type="Rhea" id="RHEA-COMP:11877"/>
        <dbReference type="ChEBI" id="CHEBI:15377"/>
        <dbReference type="ChEBI" id="CHEBI:17154"/>
        <dbReference type="ChEBI" id="CHEBI:29969"/>
        <dbReference type="ChEBI" id="CHEBI:57540"/>
        <dbReference type="ChEBI" id="CHEBI:87830"/>
        <dbReference type="ChEBI" id="CHEBI:87832"/>
    </reaction>
</comment>
<comment type="cofactor">
    <cofactor evidence="2">
        <name>Zn(2+)</name>
        <dbReference type="ChEBI" id="CHEBI:29105"/>
    </cofactor>
    <text evidence="2">Binds 1 zinc ion per subunit.</text>
</comment>
<comment type="subcellular location">
    <subcellularLocation>
        <location evidence="2">Cytoplasm</location>
    </subcellularLocation>
</comment>
<comment type="domain">
    <text evidence="2">2 residues (Tyr-58 and Arg-61) present in a large hydrophobic pocket are probably involved in substrate specificity. They are important for desuccinylation activity, but dispensable for deacetylation activity.</text>
</comment>
<comment type="miscellaneous">
    <text evidence="1 4">This protein might be subject to alternative promoter usage and might also encode a protein with a 13 residue-longer N-terminus.</text>
</comment>
<comment type="similarity">
    <text evidence="2">Belongs to the sirtuin family. Class III subfamily.</text>
</comment>
<accession>Q6MJJ2</accession>
<protein>
    <recommendedName>
        <fullName evidence="2">NAD-dependent protein deacylase</fullName>
        <ecNumber evidence="2 3">2.3.1.286</ecNumber>
    </recommendedName>
    <alternativeName>
        <fullName evidence="2">Regulatory protein SIR2 homolog</fullName>
    </alternativeName>
</protein>
<organism>
    <name type="scientific">Bdellovibrio bacteriovorus (strain ATCC 15356 / DSM 50701 / NCIMB 9529 / HD100)</name>
    <dbReference type="NCBI Taxonomy" id="264462"/>
    <lineage>
        <taxon>Bacteria</taxon>
        <taxon>Pseudomonadati</taxon>
        <taxon>Bdellovibrionota</taxon>
        <taxon>Bdellovibrionia</taxon>
        <taxon>Bdellovibrionales</taxon>
        <taxon>Pseudobdellovibrionaceae</taxon>
        <taxon>Bdellovibrio</taxon>
    </lineage>
</organism>
<proteinExistence type="inferred from homology"/>
<sequence>MDLRLFKNIVILTGAGISAESGIRTFRDQDGLWEDHRIEDVATPEAFARNPALVQRFYNLRRAQLRDPNLAPNPAHQALVDLENLWEGNFLLVTQNVDNLHRRAGSKNLLHMHGRLDRVFCLHCDEHFEWLLDLAVDQPCPHCGRKGGVRPDIVWFGEMPHHMEEIYEALDKADYFISIGTSGNVYPAAGFVRLAWKAKKIEINLKDTEISPAFDEHFVGPASTEVPRFITQFLE</sequence>